<name>RSMH_THET8</name>
<dbReference type="EC" id="2.1.1.199" evidence="1"/>
<dbReference type="EMBL" id="AP008226">
    <property type="protein sequence ID" value="BAD70899.1"/>
    <property type="molecule type" value="Genomic_DNA"/>
</dbReference>
<dbReference type="RefSeq" id="WP_011228422.1">
    <property type="nucleotide sequence ID" value="NC_006461.1"/>
</dbReference>
<dbReference type="RefSeq" id="YP_144342.1">
    <property type="nucleotide sequence ID" value="NC_006461.1"/>
</dbReference>
<dbReference type="PDB" id="1WG8">
    <property type="method" value="X-ray"/>
    <property type="resolution" value="2.00 A"/>
    <property type="chains" value="A/B=1-285"/>
</dbReference>
<dbReference type="PDBsum" id="1WG8"/>
<dbReference type="SMR" id="Q5SJD8"/>
<dbReference type="EnsemblBacteria" id="BAD70899">
    <property type="protein sequence ID" value="BAD70899"/>
    <property type="gene ID" value="BAD70899"/>
</dbReference>
<dbReference type="GeneID" id="3168225"/>
<dbReference type="KEGG" id="ttj:TTHA1076"/>
<dbReference type="PATRIC" id="fig|300852.9.peg.1056"/>
<dbReference type="eggNOG" id="COG0275">
    <property type="taxonomic scope" value="Bacteria"/>
</dbReference>
<dbReference type="HOGENOM" id="CLU_038422_2_0_0"/>
<dbReference type="PhylomeDB" id="Q5SJD8"/>
<dbReference type="EvolutionaryTrace" id="Q5SJD8"/>
<dbReference type="Proteomes" id="UP000000532">
    <property type="component" value="Chromosome"/>
</dbReference>
<dbReference type="GO" id="GO:0005737">
    <property type="term" value="C:cytoplasm"/>
    <property type="evidence" value="ECO:0007669"/>
    <property type="project" value="UniProtKB-SubCell"/>
</dbReference>
<dbReference type="GO" id="GO:0071424">
    <property type="term" value="F:rRNA (cytosine-N4-)-methyltransferase activity"/>
    <property type="evidence" value="ECO:0007669"/>
    <property type="project" value="UniProtKB-UniRule"/>
</dbReference>
<dbReference type="GO" id="GO:0070475">
    <property type="term" value="P:rRNA base methylation"/>
    <property type="evidence" value="ECO:0007669"/>
    <property type="project" value="UniProtKB-UniRule"/>
</dbReference>
<dbReference type="CDD" id="cd02440">
    <property type="entry name" value="AdoMet_MTases"/>
    <property type="match status" value="1"/>
</dbReference>
<dbReference type="Gene3D" id="1.10.150.170">
    <property type="entry name" value="Putative methyltransferase TM0872, insert domain"/>
    <property type="match status" value="1"/>
</dbReference>
<dbReference type="Gene3D" id="3.40.50.150">
    <property type="entry name" value="Vaccinia Virus protein VP39"/>
    <property type="match status" value="1"/>
</dbReference>
<dbReference type="HAMAP" id="MF_01007">
    <property type="entry name" value="16SrRNA_methyltr_H"/>
    <property type="match status" value="1"/>
</dbReference>
<dbReference type="InterPro" id="IPR002903">
    <property type="entry name" value="RsmH"/>
</dbReference>
<dbReference type="InterPro" id="IPR023397">
    <property type="entry name" value="SAM-dep_MeTrfase_MraW_recog"/>
</dbReference>
<dbReference type="InterPro" id="IPR029063">
    <property type="entry name" value="SAM-dependent_MTases_sf"/>
</dbReference>
<dbReference type="NCBIfam" id="TIGR00006">
    <property type="entry name" value="16S rRNA (cytosine(1402)-N(4))-methyltransferase RsmH"/>
    <property type="match status" value="1"/>
</dbReference>
<dbReference type="PANTHER" id="PTHR11265:SF0">
    <property type="entry name" value="12S RRNA N4-METHYLCYTIDINE METHYLTRANSFERASE"/>
    <property type="match status" value="1"/>
</dbReference>
<dbReference type="PANTHER" id="PTHR11265">
    <property type="entry name" value="S-ADENOSYL-METHYLTRANSFERASE MRAW"/>
    <property type="match status" value="1"/>
</dbReference>
<dbReference type="Pfam" id="PF01795">
    <property type="entry name" value="Methyltransf_5"/>
    <property type="match status" value="1"/>
</dbReference>
<dbReference type="PIRSF" id="PIRSF004486">
    <property type="entry name" value="MraW"/>
    <property type="match status" value="1"/>
</dbReference>
<dbReference type="SUPFAM" id="SSF81799">
    <property type="entry name" value="Putative methyltransferase TM0872, insert domain"/>
    <property type="match status" value="1"/>
</dbReference>
<dbReference type="SUPFAM" id="SSF53335">
    <property type="entry name" value="S-adenosyl-L-methionine-dependent methyltransferases"/>
    <property type="match status" value="1"/>
</dbReference>
<reference key="1">
    <citation type="submission" date="2004-11" db="EMBL/GenBank/DDBJ databases">
        <title>Complete genome sequence of Thermus thermophilus HB8.</title>
        <authorList>
            <person name="Masui R."/>
            <person name="Kurokawa K."/>
            <person name="Nakagawa N."/>
            <person name="Tokunaga F."/>
            <person name="Koyama Y."/>
            <person name="Shibata T."/>
            <person name="Oshima T."/>
            <person name="Yokoyama S."/>
            <person name="Yasunaga T."/>
            <person name="Kuramitsu S."/>
        </authorList>
    </citation>
    <scope>NUCLEOTIDE SEQUENCE [LARGE SCALE GENOMIC DNA]</scope>
    <source>
        <strain>ATCC 27634 / DSM 579 / HB8</strain>
    </source>
</reference>
<reference key="2">
    <citation type="submission" date="2004-11" db="PDB data bank">
        <title>Crystal structure of a predicted S-adenosylmethionine-dependent methyltransferase TT1512 from Thermus thermophilus HB8 at 2.0 Ang. resolution.</title>
        <authorList>
            <person name="Kishishita S."/>
            <person name="Murayama K."/>
            <person name="Shirouzu M."/>
            <person name="Yokoyama S."/>
        </authorList>
    </citation>
    <scope>X-RAY CRYSTALLOGRAPHY (2.00 ANGSTROMS) IN COMPLEX WITH S-ADENOSYL-L-METHIONINE</scope>
</reference>
<feature type="chain" id="PRO_0000108734" description="Ribosomal RNA small subunit methyltransferase H">
    <location>
        <begin position="1"/>
        <end position="285"/>
    </location>
</feature>
<feature type="region of interest" description="Disordered" evidence="2">
    <location>
        <begin position="259"/>
        <end position="285"/>
    </location>
</feature>
<feature type="binding site">
    <location>
        <begin position="34"/>
        <end position="36"/>
    </location>
    <ligand>
        <name>S-adenosyl-L-methionine</name>
        <dbReference type="ChEBI" id="CHEBI:59789"/>
    </ligand>
</feature>
<feature type="binding site" evidence="1 3">
    <location>
        <position position="51"/>
    </location>
    <ligand>
        <name>S-adenosyl-L-methionine</name>
        <dbReference type="ChEBI" id="CHEBI:59789"/>
    </ligand>
</feature>
<feature type="binding site" evidence="1 3">
    <location>
        <position position="75"/>
    </location>
    <ligand>
        <name>S-adenosyl-L-methionine</name>
        <dbReference type="ChEBI" id="CHEBI:59789"/>
    </ligand>
</feature>
<feature type="binding site" evidence="1 3">
    <location>
        <position position="96"/>
    </location>
    <ligand>
        <name>S-adenosyl-L-methionine</name>
        <dbReference type="ChEBI" id="CHEBI:59789"/>
    </ligand>
</feature>
<feature type="binding site" evidence="1 3">
    <location>
        <position position="103"/>
    </location>
    <ligand>
        <name>S-adenosyl-L-methionine</name>
        <dbReference type="ChEBI" id="CHEBI:59789"/>
    </ligand>
</feature>
<feature type="helix" evidence="4">
    <location>
        <begin position="11"/>
        <end position="18"/>
    </location>
</feature>
<feature type="strand" evidence="4">
    <location>
        <begin position="25"/>
        <end position="28"/>
    </location>
</feature>
<feature type="helix" evidence="4">
    <location>
        <begin position="35"/>
        <end position="42"/>
    </location>
</feature>
<feature type="strand" evidence="4">
    <location>
        <begin position="46"/>
        <end position="52"/>
    </location>
</feature>
<feature type="helix" evidence="4">
    <location>
        <begin position="54"/>
        <end position="62"/>
    </location>
</feature>
<feature type="strand" evidence="4">
    <location>
        <begin position="68"/>
        <end position="73"/>
    </location>
</feature>
<feature type="helix" evidence="4">
    <location>
        <begin position="75"/>
        <end position="77"/>
    </location>
</feature>
<feature type="helix" evidence="4">
    <location>
        <begin position="78"/>
        <end position="84"/>
    </location>
</feature>
<feature type="strand" evidence="4">
    <location>
        <begin position="90"/>
        <end position="96"/>
    </location>
</feature>
<feature type="helix" evidence="4">
    <location>
        <begin position="101"/>
        <end position="105"/>
    </location>
</feature>
<feature type="helix" evidence="4">
    <location>
        <begin position="107"/>
        <end position="109"/>
    </location>
</feature>
<feature type="strand" evidence="4">
    <location>
        <begin position="113"/>
        <end position="115"/>
    </location>
</feature>
<feature type="strand" evidence="4">
    <location>
        <begin position="123"/>
        <end position="125"/>
    </location>
</feature>
<feature type="helix" evidence="4">
    <location>
        <begin position="130"/>
        <end position="136"/>
    </location>
</feature>
<feature type="helix" evidence="4">
    <location>
        <begin position="139"/>
        <end position="150"/>
    </location>
</feature>
<feature type="helix" evidence="4">
    <location>
        <begin position="155"/>
        <end position="168"/>
    </location>
</feature>
<feature type="helix" evidence="4">
    <location>
        <begin position="174"/>
        <end position="185"/>
    </location>
</feature>
<feature type="strand" evidence="4">
    <location>
        <begin position="189"/>
        <end position="191"/>
    </location>
</feature>
<feature type="helix" evidence="4">
    <location>
        <begin position="195"/>
        <end position="205"/>
    </location>
</feature>
<feature type="helix" evidence="4">
    <location>
        <begin position="208"/>
        <end position="222"/>
    </location>
</feature>
<feature type="strand" evidence="4">
    <location>
        <begin position="223"/>
        <end position="233"/>
    </location>
</feature>
<feature type="helix" evidence="4">
    <location>
        <begin position="236"/>
        <end position="249"/>
    </location>
</feature>
<feature type="strand" evidence="4">
    <location>
        <begin position="251"/>
        <end position="254"/>
    </location>
</feature>
<feature type="helix" evidence="4">
    <location>
        <begin position="263"/>
        <end position="268"/>
    </location>
</feature>
<feature type="helix" evidence="4">
    <location>
        <begin position="270"/>
        <end position="274"/>
    </location>
</feature>
<feature type="strand" evidence="4">
    <location>
        <begin position="276"/>
        <end position="281"/>
    </location>
</feature>
<evidence type="ECO:0000255" key="1">
    <source>
        <dbReference type="HAMAP-Rule" id="MF_01007"/>
    </source>
</evidence>
<evidence type="ECO:0000256" key="2">
    <source>
        <dbReference type="SAM" id="MobiDB-lite"/>
    </source>
</evidence>
<evidence type="ECO:0000269" key="3">
    <source ref="2"/>
</evidence>
<evidence type="ECO:0007829" key="4">
    <source>
        <dbReference type="PDB" id="1WG8"/>
    </source>
</evidence>
<organism>
    <name type="scientific">Thermus thermophilus (strain ATCC 27634 / DSM 579 / HB8)</name>
    <dbReference type="NCBI Taxonomy" id="300852"/>
    <lineage>
        <taxon>Bacteria</taxon>
        <taxon>Thermotogati</taxon>
        <taxon>Deinococcota</taxon>
        <taxon>Deinococci</taxon>
        <taxon>Thermales</taxon>
        <taxon>Thermaceae</taxon>
        <taxon>Thermus</taxon>
    </lineage>
</organism>
<accession>Q5SJD8</accession>
<proteinExistence type="evidence at protein level"/>
<sequence>MRPMTHVPVLYQEALDLLAVRPGGVYVDATLGGAGHARGILERGGRVIGLDQDPEAVARAKGLHLPGLTVVQGNFRHLKRHLAALGVERVDGILADLGVSSFHLDDPSRGFSYQKEGPLDMRMGLEGPTAKEVVNRLPLEALARLLRELGEEPQAYRIARAIVAAREKAPIETTTQLAEIVRKAVGFRRAGHPARKTFQALRIYVNDELNALKEFLEQAAEVLAPGGRLVVIAFHSLEDRVVKRFLRESGLKVLTKKPLVPSEKEAAQNPRARSAKLRAAEKEAP</sequence>
<protein>
    <recommendedName>
        <fullName evidence="1">Ribosomal RNA small subunit methyltransferase H</fullName>
        <ecNumber evidence="1">2.1.1.199</ecNumber>
    </recommendedName>
    <alternativeName>
        <fullName evidence="1">16S rRNA m(4)C1402 methyltransferase</fullName>
    </alternativeName>
    <alternativeName>
        <fullName evidence="1">rRNA (cytosine-N(4)-)-methyltransferase RsmH</fullName>
    </alternativeName>
</protein>
<gene>
    <name evidence="1" type="primary">rsmH</name>
    <name type="synonym">mraW</name>
    <name type="ordered locus">TTHA1076</name>
</gene>
<keyword id="KW-0002">3D-structure</keyword>
<keyword id="KW-0963">Cytoplasm</keyword>
<keyword id="KW-0489">Methyltransferase</keyword>
<keyword id="KW-1185">Reference proteome</keyword>
<keyword id="KW-0698">rRNA processing</keyword>
<keyword id="KW-0949">S-adenosyl-L-methionine</keyword>
<keyword id="KW-0808">Transferase</keyword>
<comment type="function">
    <text evidence="1">Specifically methylates the N4 position of cytidine in position 1402 (C1402) of 16S rRNA.</text>
</comment>
<comment type="catalytic activity">
    <reaction evidence="1">
        <text>cytidine(1402) in 16S rRNA + S-adenosyl-L-methionine = N(4)-methylcytidine(1402) in 16S rRNA + S-adenosyl-L-homocysteine + H(+)</text>
        <dbReference type="Rhea" id="RHEA:42928"/>
        <dbReference type="Rhea" id="RHEA-COMP:10286"/>
        <dbReference type="Rhea" id="RHEA-COMP:10287"/>
        <dbReference type="ChEBI" id="CHEBI:15378"/>
        <dbReference type="ChEBI" id="CHEBI:57856"/>
        <dbReference type="ChEBI" id="CHEBI:59789"/>
        <dbReference type="ChEBI" id="CHEBI:74506"/>
        <dbReference type="ChEBI" id="CHEBI:82748"/>
        <dbReference type="EC" id="2.1.1.199"/>
    </reaction>
</comment>
<comment type="subcellular location">
    <subcellularLocation>
        <location evidence="1">Cytoplasm</location>
    </subcellularLocation>
</comment>
<comment type="similarity">
    <text evidence="1">Belongs to the methyltransferase superfamily. RsmH family.</text>
</comment>